<reference key="1">
    <citation type="submission" date="2006-08" db="EMBL/GenBank/DDBJ databases">
        <title>Complete sequence of Alkalilimnicola ehrilichei MLHE-1.</title>
        <authorList>
            <person name="Copeland A."/>
            <person name="Lucas S."/>
            <person name="Lapidus A."/>
            <person name="Barry K."/>
            <person name="Detter J.C."/>
            <person name="Glavina del Rio T."/>
            <person name="Hammon N."/>
            <person name="Israni S."/>
            <person name="Dalin E."/>
            <person name="Tice H."/>
            <person name="Pitluck S."/>
            <person name="Sims D."/>
            <person name="Brettin T."/>
            <person name="Bruce D."/>
            <person name="Han C."/>
            <person name="Tapia R."/>
            <person name="Gilna P."/>
            <person name="Schmutz J."/>
            <person name="Larimer F."/>
            <person name="Land M."/>
            <person name="Hauser L."/>
            <person name="Kyrpides N."/>
            <person name="Mikhailova N."/>
            <person name="Oremland R.S."/>
            <person name="Hoeft S.E."/>
            <person name="Switzer-Blum J."/>
            <person name="Kulp T."/>
            <person name="King G."/>
            <person name="Tabita R."/>
            <person name="Witte B."/>
            <person name="Santini J.M."/>
            <person name="Basu P."/>
            <person name="Hollibaugh J.T."/>
            <person name="Xie G."/>
            <person name="Stolz J.F."/>
            <person name="Richardson P."/>
        </authorList>
    </citation>
    <scope>NUCLEOTIDE SEQUENCE [LARGE SCALE GENOMIC DNA]</scope>
    <source>
        <strain>ATCC BAA-1101 / DSM 17681 / MLHE-1</strain>
    </source>
</reference>
<name>TATA_ALKEH</name>
<accession>Q0A5D5</accession>
<keyword id="KW-0997">Cell inner membrane</keyword>
<keyword id="KW-1003">Cell membrane</keyword>
<keyword id="KW-0472">Membrane</keyword>
<keyword id="KW-0653">Protein transport</keyword>
<keyword id="KW-1185">Reference proteome</keyword>
<keyword id="KW-0811">Translocation</keyword>
<keyword id="KW-0812">Transmembrane</keyword>
<keyword id="KW-1133">Transmembrane helix</keyword>
<keyword id="KW-0813">Transport</keyword>
<feature type="chain" id="PRO_1000071805" description="Sec-independent protein translocase protein TatA">
    <location>
        <begin position="1"/>
        <end position="90"/>
    </location>
</feature>
<feature type="transmembrane region" description="Helical" evidence="1">
    <location>
        <begin position="1"/>
        <end position="21"/>
    </location>
</feature>
<feature type="region of interest" description="Disordered" evidence="2">
    <location>
        <begin position="42"/>
        <end position="90"/>
    </location>
</feature>
<feature type="compositionally biased region" description="Basic and acidic residues" evidence="2">
    <location>
        <begin position="42"/>
        <end position="59"/>
    </location>
</feature>
<feature type="compositionally biased region" description="Basic and acidic residues" evidence="2">
    <location>
        <begin position="70"/>
        <end position="90"/>
    </location>
</feature>
<gene>
    <name evidence="1" type="primary">tatA</name>
    <name type="ordered locus">Mlg_2612</name>
</gene>
<protein>
    <recommendedName>
        <fullName evidence="1">Sec-independent protein translocase protein TatA</fullName>
    </recommendedName>
</protein>
<organism>
    <name type="scientific">Alkalilimnicola ehrlichii (strain ATCC BAA-1101 / DSM 17681 / MLHE-1)</name>
    <dbReference type="NCBI Taxonomy" id="187272"/>
    <lineage>
        <taxon>Bacteria</taxon>
        <taxon>Pseudomonadati</taxon>
        <taxon>Pseudomonadota</taxon>
        <taxon>Gammaproteobacteria</taxon>
        <taxon>Chromatiales</taxon>
        <taxon>Ectothiorhodospiraceae</taxon>
        <taxon>Alkalilimnicola</taxon>
    </lineage>
</organism>
<sequence length="90" mass="9894">MGISPWTLLIVLLIVLLVFGTKKLRNMGTDMGGAIKGFKDAMKEGEEGAKEGEKSEPSKLEQPPEEEKESGEGHTIEGERSEQPRDRHSS</sequence>
<comment type="function">
    <text evidence="1">Part of the twin-arginine translocation (Tat) system that transports large folded proteins containing a characteristic twin-arginine motif in their signal peptide across membranes. TatA could form the protein-conducting channel of the Tat system.</text>
</comment>
<comment type="subunit">
    <text evidence="1">The Tat system comprises two distinct complexes: a TatABC complex, containing multiple copies of TatA, TatB and TatC subunits, and a separate TatA complex, containing only TatA subunits. Substrates initially bind to the TatABC complex, which probably triggers association of the separate TatA complex to form the active translocon.</text>
</comment>
<comment type="subcellular location">
    <subcellularLocation>
        <location evidence="1">Cell inner membrane</location>
        <topology evidence="1">Single-pass membrane protein</topology>
    </subcellularLocation>
</comment>
<comment type="similarity">
    <text evidence="1">Belongs to the TatA/E family.</text>
</comment>
<dbReference type="EMBL" id="CP000453">
    <property type="protein sequence ID" value="ABI57952.1"/>
    <property type="molecule type" value="Genomic_DNA"/>
</dbReference>
<dbReference type="RefSeq" id="WP_011630345.1">
    <property type="nucleotide sequence ID" value="NC_008340.1"/>
</dbReference>
<dbReference type="SMR" id="Q0A5D5"/>
<dbReference type="KEGG" id="aeh:Mlg_2612"/>
<dbReference type="eggNOG" id="COG1826">
    <property type="taxonomic scope" value="Bacteria"/>
</dbReference>
<dbReference type="HOGENOM" id="CLU_086034_5_1_6"/>
<dbReference type="Proteomes" id="UP000001962">
    <property type="component" value="Chromosome"/>
</dbReference>
<dbReference type="GO" id="GO:0033281">
    <property type="term" value="C:TAT protein transport complex"/>
    <property type="evidence" value="ECO:0007669"/>
    <property type="project" value="UniProtKB-UniRule"/>
</dbReference>
<dbReference type="GO" id="GO:0008320">
    <property type="term" value="F:protein transmembrane transporter activity"/>
    <property type="evidence" value="ECO:0007669"/>
    <property type="project" value="UniProtKB-UniRule"/>
</dbReference>
<dbReference type="GO" id="GO:0043953">
    <property type="term" value="P:protein transport by the Tat complex"/>
    <property type="evidence" value="ECO:0007669"/>
    <property type="project" value="UniProtKB-UniRule"/>
</dbReference>
<dbReference type="Gene3D" id="1.20.5.3310">
    <property type="match status" value="1"/>
</dbReference>
<dbReference type="HAMAP" id="MF_00236">
    <property type="entry name" value="TatA_E"/>
    <property type="match status" value="1"/>
</dbReference>
<dbReference type="InterPro" id="IPR003369">
    <property type="entry name" value="TatA/B/E"/>
</dbReference>
<dbReference type="InterPro" id="IPR006312">
    <property type="entry name" value="TatA/E"/>
</dbReference>
<dbReference type="NCBIfam" id="NF002813">
    <property type="entry name" value="PRK02958.1"/>
    <property type="match status" value="1"/>
</dbReference>
<dbReference type="NCBIfam" id="TIGR01411">
    <property type="entry name" value="tatAE"/>
    <property type="match status" value="1"/>
</dbReference>
<dbReference type="PANTHER" id="PTHR42982">
    <property type="entry name" value="SEC-INDEPENDENT PROTEIN TRANSLOCASE PROTEIN TATA"/>
    <property type="match status" value="1"/>
</dbReference>
<dbReference type="PANTHER" id="PTHR42982:SF1">
    <property type="entry name" value="SEC-INDEPENDENT PROTEIN TRANSLOCASE PROTEIN TATA"/>
    <property type="match status" value="1"/>
</dbReference>
<dbReference type="Pfam" id="PF02416">
    <property type="entry name" value="TatA_B_E"/>
    <property type="match status" value="1"/>
</dbReference>
<evidence type="ECO:0000255" key="1">
    <source>
        <dbReference type="HAMAP-Rule" id="MF_00236"/>
    </source>
</evidence>
<evidence type="ECO:0000256" key="2">
    <source>
        <dbReference type="SAM" id="MobiDB-lite"/>
    </source>
</evidence>
<proteinExistence type="inferred from homology"/>